<feature type="chain" id="PRO_0000107912" description="Arylamine N-acetyltransferase 2">
    <location>
        <begin position="1"/>
        <end position="290"/>
    </location>
</feature>
<feature type="active site" description="Acyl-thioester intermediate" evidence="1">
    <location>
        <position position="68"/>
    </location>
</feature>
<feature type="active site" evidence="1">
    <location>
        <position position="107"/>
    </location>
</feature>
<feature type="active site" evidence="1">
    <location>
        <position position="122"/>
    </location>
</feature>
<feature type="binding site" evidence="1">
    <location>
        <position position="103"/>
    </location>
    <ligand>
        <name>CoA</name>
        <dbReference type="ChEBI" id="CHEBI:57287"/>
    </ligand>
</feature>
<feature type="binding site" evidence="1">
    <location>
        <position position="104"/>
    </location>
    <ligand>
        <name>CoA</name>
        <dbReference type="ChEBI" id="CHEBI:57287"/>
    </ligand>
</feature>
<feature type="binding site" evidence="1">
    <location>
        <begin position="106"/>
        <end position="107"/>
    </location>
    <ligand>
        <name>substrate</name>
    </ligand>
</feature>
<feature type="binding site" evidence="1">
    <location>
        <position position="208"/>
    </location>
    <ligand>
        <name>CoA</name>
        <dbReference type="ChEBI" id="CHEBI:57287"/>
    </ligand>
</feature>
<feature type="sequence variant" description="In allele NAT2*21; slow acetylator." evidence="4">
    <original>V</original>
    <variation>I</variation>
    <location>
        <position position="121"/>
    </location>
</feature>
<feature type="sequence variant" description="In allele NAT2*21; slow acetylator." evidence="4">
    <original>V</original>
    <variation>I</variation>
    <location>
        <position position="266"/>
    </location>
</feature>
<name>ARY2_RAT</name>
<protein>
    <recommendedName>
        <fullName evidence="6">Arylamine N-acetyltransferase 2</fullName>
        <ecNumber evidence="3 5">2.3.1.5</ecNumber>
    </recommendedName>
    <alternativeName>
        <fullName>Arylamide acetylase 2</fullName>
    </alternativeName>
    <alternativeName>
        <fullName>N-acetyltransferase type 2</fullName>
        <shortName>AT-2</shortName>
        <shortName>NAT-2</shortName>
    </alternativeName>
    <alternativeName>
        <fullName>N-hydroxyarylamine O-acetyltransferase</fullName>
        <ecNumber evidence="2">2.3.1.118</ecNumber>
    </alternativeName>
</protein>
<comment type="function">
    <text evidence="3 5">Catalyzes the N- or O-acetylation of various arylamine and heterocyclic amine substrates. Participates in the detoxification of a plethora of hydrazine and arylamine drugs.</text>
</comment>
<comment type="catalytic activity">
    <reaction evidence="3 5">
        <text>an arylamine + acetyl-CoA = an N-acetylarylamine + CoA</text>
        <dbReference type="Rhea" id="RHEA:16613"/>
        <dbReference type="ChEBI" id="CHEBI:13790"/>
        <dbReference type="ChEBI" id="CHEBI:50471"/>
        <dbReference type="ChEBI" id="CHEBI:57287"/>
        <dbReference type="ChEBI" id="CHEBI:57288"/>
        <dbReference type="EC" id="2.3.1.5"/>
    </reaction>
    <physiologicalReaction direction="left-to-right" evidence="7 8">
        <dbReference type="Rhea" id="RHEA:16614"/>
    </physiologicalReaction>
</comment>
<comment type="catalytic activity">
    <reaction evidence="2">
        <text>an N-hydroxyarylamine + acetyl-CoA = an N-acetoxyarylamine + CoA</text>
        <dbReference type="Rhea" id="RHEA:20277"/>
        <dbReference type="ChEBI" id="CHEBI:13792"/>
        <dbReference type="ChEBI" id="CHEBI:21494"/>
        <dbReference type="ChEBI" id="CHEBI:57287"/>
        <dbReference type="ChEBI" id="CHEBI:57288"/>
        <dbReference type="EC" id="2.3.1.118"/>
    </reaction>
</comment>
<comment type="biophysicochemical properties">
    <kinetics>
        <KM evidence="5">32.2 uM for 2-aminofluorene</KM>
        <KM evidence="5">138 uM for 4-aminoazobenzene</KM>
        <Vmax evidence="5">59.0 nmol/min/mg enzyme toward 4-aminoazobenzene</Vmax>
        <Vmax evidence="5">833.0 nmol/min/mg enzyme toward 2-aminofluorene</Vmax>
    </kinetics>
</comment>
<comment type="subcellular location">
    <subcellularLocation>
        <location>Cytoplasm</location>
    </subcellularLocation>
</comment>
<comment type="polymorphism">
    <text>There are two forms of NAT2: a rapid isoform (NAT2*21A) and a slow isoform (NAT2*21B).</text>
</comment>
<comment type="similarity">
    <text evidence="6">Belongs to the arylamine N-acetyltransferase family.</text>
</comment>
<proteinExistence type="evidence at protein level"/>
<organism>
    <name type="scientific">Rattus norvegicus</name>
    <name type="common">Rat</name>
    <dbReference type="NCBI Taxonomy" id="10116"/>
    <lineage>
        <taxon>Eukaryota</taxon>
        <taxon>Metazoa</taxon>
        <taxon>Chordata</taxon>
        <taxon>Craniata</taxon>
        <taxon>Vertebrata</taxon>
        <taxon>Euteleostomi</taxon>
        <taxon>Mammalia</taxon>
        <taxon>Eutheria</taxon>
        <taxon>Euarchontoglires</taxon>
        <taxon>Glires</taxon>
        <taxon>Rodentia</taxon>
        <taxon>Myomorpha</taxon>
        <taxon>Muroidea</taxon>
        <taxon>Muridae</taxon>
        <taxon>Murinae</taxon>
        <taxon>Rattus</taxon>
    </lineage>
</organism>
<dbReference type="EC" id="2.3.1.5" evidence="3 5"/>
<dbReference type="EC" id="2.3.1.118" evidence="2"/>
<dbReference type="EMBL" id="U01348">
    <property type="protein sequence ID" value="AAA70161.1"/>
    <property type="molecule type" value="mRNA"/>
</dbReference>
<dbReference type="EMBL" id="U23418">
    <property type="protein sequence ID" value="AAB53956.1"/>
    <property type="molecule type" value="Genomic_DNA"/>
</dbReference>
<dbReference type="EMBL" id="U19272">
    <property type="protein sequence ID" value="AAB60501.1"/>
    <property type="molecule type" value="Genomic_DNA"/>
</dbReference>
<dbReference type="EMBL" id="U17261">
    <property type="protein sequence ID" value="AAA56772.1"/>
    <property type="molecule type" value="mRNA"/>
</dbReference>
<dbReference type="PIR" id="I58425">
    <property type="entry name" value="I58425"/>
</dbReference>
<dbReference type="RefSeq" id="NP_446306.1">
    <property type="nucleotide sequence ID" value="NM_053854.1"/>
</dbReference>
<dbReference type="SMR" id="P50298"/>
<dbReference type="FunCoup" id="P50298">
    <property type="interactions" value="148"/>
</dbReference>
<dbReference type="STRING" id="10116.ENSRNOP00000051430"/>
<dbReference type="iPTMnet" id="P50298"/>
<dbReference type="PhosphoSitePlus" id="P50298"/>
<dbReference type="PaxDb" id="10116-ENSRNOP00000051430"/>
<dbReference type="GeneID" id="116632"/>
<dbReference type="KEGG" id="rno:116632"/>
<dbReference type="UCSC" id="RGD:70492">
    <property type="organism name" value="rat"/>
</dbReference>
<dbReference type="AGR" id="RGD:70492"/>
<dbReference type="CTD" id="10"/>
<dbReference type="RGD" id="70492">
    <property type="gene designation" value="Nat2"/>
</dbReference>
<dbReference type="eggNOG" id="ENOG502RD0D">
    <property type="taxonomic scope" value="Eukaryota"/>
</dbReference>
<dbReference type="InParanoid" id="P50298"/>
<dbReference type="OrthoDB" id="10260017at2759"/>
<dbReference type="BRENDA" id="2.3.1.56">
    <property type="organism ID" value="5301"/>
</dbReference>
<dbReference type="Reactome" id="R-RNO-156582">
    <property type="pathway name" value="Acetylation"/>
</dbReference>
<dbReference type="Reactome" id="R-RNO-9753281">
    <property type="pathway name" value="Paracetamol ADME"/>
</dbReference>
<dbReference type="SABIO-RK" id="P50298"/>
<dbReference type="PRO" id="PR:P50298"/>
<dbReference type="Proteomes" id="UP000002494">
    <property type="component" value="Unplaced"/>
</dbReference>
<dbReference type="GO" id="GO:0005737">
    <property type="term" value="C:cytoplasm"/>
    <property type="evidence" value="ECO:0007669"/>
    <property type="project" value="UniProtKB-SubCell"/>
</dbReference>
<dbReference type="GO" id="GO:0004060">
    <property type="term" value="F:arylamine N-acetyltransferase activity"/>
    <property type="evidence" value="ECO:0000314"/>
    <property type="project" value="RGD"/>
</dbReference>
<dbReference type="GO" id="GO:0008080">
    <property type="term" value="F:N-acetyltransferase activity"/>
    <property type="evidence" value="ECO:0000314"/>
    <property type="project" value="RGD"/>
</dbReference>
<dbReference type="GO" id="GO:0046990">
    <property type="term" value="F:N-hydroxyarylamine O-acetyltransferase activity"/>
    <property type="evidence" value="ECO:0000250"/>
    <property type="project" value="UniProtKB"/>
</dbReference>
<dbReference type="GO" id="GO:0048565">
    <property type="term" value="P:digestive tract development"/>
    <property type="evidence" value="ECO:0000270"/>
    <property type="project" value="RGD"/>
</dbReference>
<dbReference type="GO" id="GO:0001666">
    <property type="term" value="P:response to hypoxia"/>
    <property type="evidence" value="ECO:0000270"/>
    <property type="project" value="RGD"/>
</dbReference>
<dbReference type="GO" id="GO:0032496">
    <property type="term" value="P:response to lipopolysaccharide"/>
    <property type="evidence" value="ECO:0000270"/>
    <property type="project" value="RGD"/>
</dbReference>
<dbReference type="GO" id="GO:0009410">
    <property type="term" value="P:response to xenobiotic stimulus"/>
    <property type="evidence" value="ECO:0000270"/>
    <property type="project" value="RGD"/>
</dbReference>
<dbReference type="FunFam" id="3.30.2140.20:FF:000001">
    <property type="entry name" value="Arylamine N-acetyltransferase 1"/>
    <property type="match status" value="1"/>
</dbReference>
<dbReference type="Gene3D" id="3.30.2140.20">
    <property type="match status" value="1"/>
</dbReference>
<dbReference type="InterPro" id="IPR001447">
    <property type="entry name" value="Arylamine_N-AcTrfase"/>
</dbReference>
<dbReference type="InterPro" id="IPR053710">
    <property type="entry name" value="Arylamine_NAT_domain_sf"/>
</dbReference>
<dbReference type="InterPro" id="IPR038765">
    <property type="entry name" value="Papain-like_cys_pep_sf"/>
</dbReference>
<dbReference type="PANTHER" id="PTHR11786:SF8">
    <property type="entry name" value="ARYLAMINE N-ACETYLTRANSFERASE 1"/>
    <property type="match status" value="1"/>
</dbReference>
<dbReference type="PANTHER" id="PTHR11786">
    <property type="entry name" value="N-HYDROXYARYLAMINE O-ACETYLTRANSFERASE"/>
    <property type="match status" value="1"/>
</dbReference>
<dbReference type="Pfam" id="PF00797">
    <property type="entry name" value="Acetyltransf_2"/>
    <property type="match status" value="1"/>
</dbReference>
<dbReference type="PRINTS" id="PR01543">
    <property type="entry name" value="ANATRNSFRASE"/>
</dbReference>
<dbReference type="SUPFAM" id="SSF54001">
    <property type="entry name" value="Cysteine proteinases"/>
    <property type="match status" value="1"/>
</dbReference>
<keyword id="KW-0012">Acyltransferase</keyword>
<keyword id="KW-0963">Cytoplasm</keyword>
<keyword id="KW-1185">Reference proteome</keyword>
<keyword id="KW-0808">Transferase</keyword>
<gene>
    <name type="primary">Nat2</name>
    <name type="synonym">Aac2</name>
</gene>
<evidence type="ECO:0000250" key="1"/>
<evidence type="ECO:0000250" key="2">
    <source>
        <dbReference type="UniProtKB" id="P11245"/>
    </source>
</evidence>
<evidence type="ECO:0000269" key="3">
    <source>
    </source>
</evidence>
<evidence type="ECO:0000269" key="4">
    <source>
    </source>
</evidence>
<evidence type="ECO:0000269" key="5">
    <source>
    </source>
</evidence>
<evidence type="ECO:0000305" key="6"/>
<evidence type="ECO:0000305" key="7">
    <source>
    </source>
</evidence>
<evidence type="ECO:0000305" key="8">
    <source>
    </source>
</evidence>
<sequence length="290" mass="33756">MDIEAYFERIGYQSSRNKLDLEELTEILQHQIRAIPFENLNIHCGESMELNLEVIFDQVVRKKRGGWCLQVNHLLYWALTKMGFEATMLGGYVFNTPANKYSSGMIHLLVQVTLSGKDYIVDAGFGRSYQMWEPLELTSGKDQPQVPAIFRLTEENGTWYLDQIRREQYVPNQEFVNSDLLEKNKYRKIYSFTLEPRTIEDFESINTYLQTSPASLFTSKSFCSLQTLEGVHCLVGSTLTYRRFSYKDNIDLVEFKSLTEEEIEDVLKTIFGVSLERKLVPKHGDRFFTI</sequence>
<accession>P50298</accession>
<reference key="1">
    <citation type="journal article" date="1995" name="Eur. J. Biochem.">
        <title>Complementary DNAs for two arylamine N-acetyltransferases with identical 5' non-coding regions from rat pineal gland.</title>
        <authorList>
            <person name="Ebisawa T."/>
            <person name="Sasaki Y."/>
            <person name="Deguchi T."/>
        </authorList>
    </citation>
    <scope>NUCLEOTIDE SEQUENCE [MRNA]</scope>
    <scope>CATALYTIC ACTIVITY</scope>
    <scope>FUNCTION</scope>
    <source>
        <strain>Wistar</strain>
        <tissue>Pineal gland</tissue>
    </source>
</reference>
<reference key="2">
    <citation type="journal article" date="1995" name="Pharmacogenetics">
        <title>Cloning, sequencing and expression of NAT1 and NAT2 encoding genes from rapid and slow acetylator inbred rats.</title>
        <authorList>
            <person name="Doll M.A."/>
            <person name="Hein D.W."/>
        </authorList>
    </citation>
    <scope>NUCLEOTIDE SEQUENCE [GENOMIC DNA]</scope>
    <scope>ALLELE NAT2*21</scope>
    <source>
        <strain>WKY/NCRLBR</strain>
        <tissue>Heart</tissue>
    </source>
</reference>
<reference key="3">
    <citation type="journal article" date="1996" name="Carcinogenesis">
        <title>Recombinant rat and hamster N-acetyltransferases-1 and -2: relative rates of N-acetylation of arylamines and N,O-acyltransfer with arylhydroxamic acids.</title>
        <authorList>
            <person name="Jones R.F."/>
            <person name="Land S.J."/>
            <person name="King C.M."/>
        </authorList>
    </citation>
    <scope>NUCLEOTIDE SEQUENCE [MRNA]</scope>
    <scope>FUNCTION</scope>
    <scope>CATALYTIC ACTIVITY</scope>
    <scope>BIOPHYSICOCHEMICAL PROPERTIES</scope>
</reference>